<organism>
    <name type="scientific">Mycobacterium tuberculosis (strain ATCC 25618 / H37Rv)</name>
    <dbReference type="NCBI Taxonomy" id="83332"/>
    <lineage>
        <taxon>Bacteria</taxon>
        <taxon>Bacillati</taxon>
        <taxon>Actinomycetota</taxon>
        <taxon>Actinomycetes</taxon>
        <taxon>Mycobacteriales</taxon>
        <taxon>Mycobacteriaceae</taxon>
        <taxon>Mycobacterium</taxon>
        <taxon>Mycobacterium tuberculosis complex</taxon>
    </lineage>
</organism>
<feature type="chain" id="PRO_0000164327" description="Protein NrdI">
    <location>
        <begin position="1"/>
        <end position="150"/>
    </location>
</feature>
<feature type="strand" evidence="4">
    <location>
        <begin position="8"/>
        <end position="10"/>
    </location>
</feature>
<feature type="helix" evidence="4">
    <location>
        <begin position="17"/>
        <end position="25"/>
    </location>
</feature>
<feature type="strand" evidence="3">
    <location>
        <begin position="29"/>
        <end position="31"/>
    </location>
</feature>
<feature type="strand" evidence="4">
    <location>
        <begin position="34"/>
        <end position="36"/>
    </location>
</feature>
<feature type="strand" evidence="4">
    <location>
        <begin position="44"/>
        <end position="49"/>
    </location>
</feature>
<feature type="helix" evidence="4">
    <location>
        <begin position="68"/>
        <end position="75"/>
    </location>
</feature>
<feature type="helix" evidence="4">
    <location>
        <begin position="77"/>
        <end position="81"/>
    </location>
</feature>
<feature type="strand" evidence="4">
    <location>
        <begin position="83"/>
        <end position="90"/>
    </location>
</feature>
<feature type="helix" evidence="4">
    <location>
        <begin position="92"/>
        <end position="97"/>
    </location>
</feature>
<feature type="helix" evidence="4">
    <location>
        <begin position="100"/>
        <end position="107"/>
    </location>
</feature>
<feature type="strand" evidence="4">
    <location>
        <begin position="108"/>
        <end position="110"/>
    </location>
</feature>
<feature type="strand" evidence="4">
    <location>
        <begin position="113"/>
        <end position="118"/>
    </location>
</feature>
<feature type="helix" evidence="4">
    <location>
        <begin position="123"/>
        <end position="137"/>
    </location>
</feature>
<feature type="turn" evidence="4">
    <location>
        <begin position="138"/>
        <end position="140"/>
    </location>
</feature>
<protein>
    <recommendedName>
        <fullName>Protein NrdI</fullName>
    </recommendedName>
</protein>
<gene>
    <name type="primary">nrdI</name>
    <name type="ordered locus">Rv3052c</name>
    <name type="ORF">MTCY22D7.30</name>
</gene>
<keyword id="KW-0002">3D-structure</keyword>
<keyword id="KW-1185">Reference proteome</keyword>
<evidence type="ECO:0000250" key="1"/>
<evidence type="ECO:0000305" key="2"/>
<evidence type="ECO:0007829" key="3">
    <source>
        <dbReference type="PDB" id="8J4X"/>
    </source>
</evidence>
<evidence type="ECO:0007829" key="4">
    <source>
        <dbReference type="PDB" id="8J4Y"/>
    </source>
</evidence>
<dbReference type="EMBL" id="AL123456">
    <property type="protein sequence ID" value="CCP45861.1"/>
    <property type="molecule type" value="Genomic_DNA"/>
</dbReference>
<dbReference type="PIR" id="E70648">
    <property type="entry name" value="E70648"/>
</dbReference>
<dbReference type="RefSeq" id="NP_217568.1">
    <property type="nucleotide sequence ID" value="NC_000962.3"/>
</dbReference>
<dbReference type="RefSeq" id="WP_003415981.1">
    <property type="nucleotide sequence ID" value="NZ_NVQJ01000011.1"/>
</dbReference>
<dbReference type="PDB" id="8J4V">
    <property type="method" value="X-ray"/>
    <property type="resolution" value="1.11 A"/>
    <property type="chains" value="C=5-149"/>
</dbReference>
<dbReference type="PDB" id="8J4W">
    <property type="method" value="X-ray"/>
    <property type="resolution" value="1.21 A"/>
    <property type="chains" value="C=5-149"/>
</dbReference>
<dbReference type="PDB" id="8J4X">
    <property type="method" value="X-ray"/>
    <property type="resolution" value="3.04 A"/>
    <property type="chains" value="G/I=1-150"/>
</dbReference>
<dbReference type="PDB" id="8J4Y">
    <property type="method" value="X-ray"/>
    <property type="resolution" value="3.02 A"/>
    <property type="chains" value="G/I=1-150"/>
</dbReference>
<dbReference type="PDBsum" id="8J4V"/>
<dbReference type="PDBsum" id="8J4W"/>
<dbReference type="PDBsum" id="8J4X"/>
<dbReference type="PDBsum" id="8J4Y"/>
<dbReference type="SMR" id="P9WIZ3"/>
<dbReference type="STRING" id="83332.Rv3052c"/>
<dbReference type="PaxDb" id="83332-Rv3052c"/>
<dbReference type="DNASU" id="888885"/>
<dbReference type="GeneID" id="45427045"/>
<dbReference type="GeneID" id="888885"/>
<dbReference type="KEGG" id="mtu:Rv3052c"/>
<dbReference type="KEGG" id="mtv:RVBD_3052c"/>
<dbReference type="TubercuList" id="Rv3052c"/>
<dbReference type="eggNOG" id="COG1780">
    <property type="taxonomic scope" value="Bacteria"/>
</dbReference>
<dbReference type="InParanoid" id="P9WIZ3"/>
<dbReference type="OrthoDB" id="350535at2"/>
<dbReference type="PhylomeDB" id="P9WIZ3"/>
<dbReference type="Proteomes" id="UP000001584">
    <property type="component" value="Chromosome"/>
</dbReference>
<dbReference type="GO" id="GO:0010181">
    <property type="term" value="F:FMN binding"/>
    <property type="evidence" value="ECO:0000318"/>
    <property type="project" value="GO_Central"/>
</dbReference>
<dbReference type="GO" id="GO:0036211">
    <property type="term" value="P:protein modification process"/>
    <property type="evidence" value="ECO:0007669"/>
    <property type="project" value="InterPro"/>
</dbReference>
<dbReference type="FunFam" id="3.40.50.360:FF:000005">
    <property type="entry name" value="Protein NrdI"/>
    <property type="match status" value="1"/>
</dbReference>
<dbReference type="Gene3D" id="3.40.50.360">
    <property type="match status" value="1"/>
</dbReference>
<dbReference type="HAMAP" id="MF_00128">
    <property type="entry name" value="NrdI"/>
    <property type="match status" value="1"/>
</dbReference>
<dbReference type="InterPro" id="IPR029039">
    <property type="entry name" value="Flavoprotein-like_sf"/>
</dbReference>
<dbReference type="InterPro" id="IPR020852">
    <property type="entry name" value="RNR_Ib_NrdI_bac"/>
</dbReference>
<dbReference type="InterPro" id="IPR004465">
    <property type="entry name" value="RNR_NrdI"/>
</dbReference>
<dbReference type="NCBIfam" id="TIGR00333">
    <property type="entry name" value="nrdI"/>
    <property type="match status" value="1"/>
</dbReference>
<dbReference type="PANTHER" id="PTHR37297">
    <property type="entry name" value="PROTEIN NRDI"/>
    <property type="match status" value="1"/>
</dbReference>
<dbReference type="PANTHER" id="PTHR37297:SF1">
    <property type="entry name" value="PROTEIN NRDI"/>
    <property type="match status" value="1"/>
</dbReference>
<dbReference type="Pfam" id="PF07972">
    <property type="entry name" value="Flavodoxin_NdrI"/>
    <property type="match status" value="1"/>
</dbReference>
<dbReference type="PIRSF" id="PIRSF005087">
    <property type="entry name" value="NrdI"/>
    <property type="match status" value="1"/>
</dbReference>
<dbReference type="SUPFAM" id="SSF52218">
    <property type="entry name" value="Flavoproteins"/>
    <property type="match status" value="1"/>
</dbReference>
<sequence>MDIAGRSLVYFSSVSENTHRFVQKLGIPATRIPLHGRIEVDEPYVLILPTYGGGRANPGLDAGGYVPKQVIAFLNNDHNRAQLRGVIAAGNTNFGAEFCYAGDVVSRKCSVPYLYRFELMGTEDDVAAVRTGLAEFWKEQTCHQPSLQSL</sequence>
<reference key="1">
    <citation type="journal article" date="1998" name="Nature">
        <title>Deciphering the biology of Mycobacterium tuberculosis from the complete genome sequence.</title>
        <authorList>
            <person name="Cole S.T."/>
            <person name="Brosch R."/>
            <person name="Parkhill J."/>
            <person name="Garnier T."/>
            <person name="Churcher C.M."/>
            <person name="Harris D.E."/>
            <person name="Gordon S.V."/>
            <person name="Eiglmeier K."/>
            <person name="Gas S."/>
            <person name="Barry C.E. III"/>
            <person name="Tekaia F."/>
            <person name="Badcock K."/>
            <person name="Basham D."/>
            <person name="Brown D."/>
            <person name="Chillingworth T."/>
            <person name="Connor R."/>
            <person name="Davies R.M."/>
            <person name="Devlin K."/>
            <person name="Feltwell T."/>
            <person name="Gentles S."/>
            <person name="Hamlin N."/>
            <person name="Holroyd S."/>
            <person name="Hornsby T."/>
            <person name="Jagels K."/>
            <person name="Krogh A."/>
            <person name="McLean J."/>
            <person name="Moule S."/>
            <person name="Murphy L.D."/>
            <person name="Oliver S."/>
            <person name="Osborne J."/>
            <person name="Quail M.A."/>
            <person name="Rajandream M.A."/>
            <person name="Rogers J."/>
            <person name="Rutter S."/>
            <person name="Seeger K."/>
            <person name="Skelton S."/>
            <person name="Squares S."/>
            <person name="Squares R."/>
            <person name="Sulston J.E."/>
            <person name="Taylor K."/>
            <person name="Whitehead S."/>
            <person name="Barrell B.G."/>
        </authorList>
    </citation>
    <scope>NUCLEOTIDE SEQUENCE [LARGE SCALE GENOMIC DNA]</scope>
    <source>
        <strain>ATCC 25618 / H37Rv</strain>
    </source>
</reference>
<reference key="2">
    <citation type="journal article" date="2011" name="Mol. Cell. Proteomics">
        <title>Proteogenomic analysis of Mycobacterium tuberculosis by high resolution mass spectrometry.</title>
        <authorList>
            <person name="Kelkar D.S."/>
            <person name="Kumar D."/>
            <person name="Kumar P."/>
            <person name="Balakrishnan L."/>
            <person name="Muthusamy B."/>
            <person name="Yadav A.K."/>
            <person name="Shrivastava P."/>
            <person name="Marimuthu A."/>
            <person name="Anand S."/>
            <person name="Sundaram H."/>
            <person name="Kingsbury R."/>
            <person name="Harsha H.C."/>
            <person name="Nair B."/>
            <person name="Prasad T.S."/>
            <person name="Chauhan D.S."/>
            <person name="Katoch K."/>
            <person name="Katoch V.M."/>
            <person name="Kumar P."/>
            <person name="Chaerkady R."/>
            <person name="Ramachandran S."/>
            <person name="Dash D."/>
            <person name="Pandey A."/>
        </authorList>
    </citation>
    <scope>IDENTIFICATION BY MASS SPECTROMETRY [LARGE SCALE ANALYSIS]</scope>
    <source>
        <strain>ATCC 25618 / H37Rv</strain>
    </source>
</reference>
<proteinExistence type="evidence at protein level"/>
<comment type="function">
    <text evidence="1">Probably involved in ribonucleotide reductase function.</text>
</comment>
<comment type="similarity">
    <text evidence="2">Belongs to the NrdI family.</text>
</comment>
<name>NRDI_MYCTU</name>
<accession>P9WIZ3</accession>
<accession>L0TBE6</accession>
<accession>P65548</accession>
<accession>P95107</accession>